<proteinExistence type="inferred from homology"/>
<evidence type="ECO:0000255" key="1">
    <source>
        <dbReference type="HAMAP-Rule" id="MF_00817"/>
    </source>
</evidence>
<feature type="chain" id="PRO_1000062363" description="NADPH-dependent 7-cyano-7-deazaguanine reductase">
    <location>
        <begin position="1"/>
        <end position="286"/>
    </location>
</feature>
<feature type="active site" description="Thioimide intermediate" evidence="1">
    <location>
        <position position="194"/>
    </location>
</feature>
<feature type="active site" description="Proton donor" evidence="1">
    <location>
        <position position="201"/>
    </location>
</feature>
<feature type="binding site" evidence="1">
    <location>
        <begin position="92"/>
        <end position="94"/>
    </location>
    <ligand>
        <name>substrate</name>
    </ligand>
</feature>
<feature type="binding site" evidence="1">
    <location>
        <begin position="94"/>
        <end position="95"/>
    </location>
    <ligand>
        <name>NADPH</name>
        <dbReference type="ChEBI" id="CHEBI:57783"/>
    </ligand>
</feature>
<feature type="binding site" evidence="1">
    <location>
        <begin position="233"/>
        <end position="234"/>
    </location>
    <ligand>
        <name>substrate</name>
    </ligand>
</feature>
<feature type="binding site" evidence="1">
    <location>
        <begin position="262"/>
        <end position="263"/>
    </location>
    <ligand>
        <name>NADPH</name>
        <dbReference type="ChEBI" id="CHEBI:57783"/>
    </ligand>
</feature>
<sequence length="286" mass="32706">MTHNHDPYSDAKELAGLTLGKATDYQAEYDASLLQGVPRSLNRNAINLTAESLPFHGADIWTAYELSWLNAKGKPMVAIADIQLSHESQNLIESKSFKLYLNSFNQTKFDNIDAVQKTLVQDLSECAQGQVTVKIIEPKSFGIQRVVELPGTCIDDLDIEVSDYDFNPDYLENSTDDKQIVAETLNSNLLKSNCLITSQPDWGSVMIRYQGPKIDREKLLRYLISFRQHNEFHEQCVERIFVDLKHYCHCTKLTVYARYTRRGGLDINPYRSDFEHPGESHRLARQ</sequence>
<organism>
    <name type="scientific">Shewanella sp. (strain MR-4)</name>
    <dbReference type="NCBI Taxonomy" id="60480"/>
    <lineage>
        <taxon>Bacteria</taxon>
        <taxon>Pseudomonadati</taxon>
        <taxon>Pseudomonadota</taxon>
        <taxon>Gammaproteobacteria</taxon>
        <taxon>Alteromonadales</taxon>
        <taxon>Shewanellaceae</taxon>
        <taxon>Shewanella</taxon>
    </lineage>
</organism>
<keyword id="KW-0963">Cytoplasm</keyword>
<keyword id="KW-0521">NADP</keyword>
<keyword id="KW-0560">Oxidoreductase</keyword>
<keyword id="KW-0671">Queuosine biosynthesis</keyword>
<accession>Q0HGT5</accession>
<comment type="function">
    <text evidence="1">Catalyzes the NADPH-dependent reduction of 7-cyano-7-deazaguanine (preQ0) to 7-aminomethyl-7-deazaguanine (preQ1).</text>
</comment>
<comment type="catalytic activity">
    <reaction evidence="1">
        <text>7-aminomethyl-7-carbaguanine + 2 NADP(+) = 7-cyano-7-deazaguanine + 2 NADPH + 3 H(+)</text>
        <dbReference type="Rhea" id="RHEA:13409"/>
        <dbReference type="ChEBI" id="CHEBI:15378"/>
        <dbReference type="ChEBI" id="CHEBI:45075"/>
        <dbReference type="ChEBI" id="CHEBI:57783"/>
        <dbReference type="ChEBI" id="CHEBI:58349"/>
        <dbReference type="ChEBI" id="CHEBI:58703"/>
        <dbReference type="EC" id="1.7.1.13"/>
    </reaction>
</comment>
<comment type="pathway">
    <text evidence="1">tRNA modification; tRNA-queuosine biosynthesis.</text>
</comment>
<comment type="subunit">
    <text evidence="1">Homodimer.</text>
</comment>
<comment type="subcellular location">
    <subcellularLocation>
        <location evidence="1">Cytoplasm</location>
    </subcellularLocation>
</comment>
<comment type="similarity">
    <text evidence="1">Belongs to the GTP cyclohydrolase I family. QueF type 2 subfamily.</text>
</comment>
<reference key="1">
    <citation type="submission" date="2006-08" db="EMBL/GenBank/DDBJ databases">
        <title>Complete sequence of Shewanella sp. MR-4.</title>
        <authorList>
            <consortium name="US DOE Joint Genome Institute"/>
            <person name="Copeland A."/>
            <person name="Lucas S."/>
            <person name="Lapidus A."/>
            <person name="Barry K."/>
            <person name="Detter J.C."/>
            <person name="Glavina del Rio T."/>
            <person name="Hammon N."/>
            <person name="Israni S."/>
            <person name="Dalin E."/>
            <person name="Tice H."/>
            <person name="Pitluck S."/>
            <person name="Kiss H."/>
            <person name="Brettin T."/>
            <person name="Bruce D."/>
            <person name="Han C."/>
            <person name="Tapia R."/>
            <person name="Gilna P."/>
            <person name="Schmutz J."/>
            <person name="Larimer F."/>
            <person name="Land M."/>
            <person name="Hauser L."/>
            <person name="Kyrpides N."/>
            <person name="Mikhailova N."/>
            <person name="Nealson K."/>
            <person name="Konstantinidis K."/>
            <person name="Klappenbach J."/>
            <person name="Tiedje J."/>
            <person name="Richardson P."/>
        </authorList>
    </citation>
    <scope>NUCLEOTIDE SEQUENCE [LARGE SCALE GENOMIC DNA]</scope>
    <source>
        <strain>MR-4</strain>
    </source>
</reference>
<protein>
    <recommendedName>
        <fullName evidence="1">NADPH-dependent 7-cyano-7-deazaguanine reductase</fullName>
        <ecNumber evidence="1">1.7.1.13</ecNumber>
    </recommendedName>
    <alternativeName>
        <fullName evidence="1">7-cyano-7-carbaguanine reductase</fullName>
    </alternativeName>
    <alternativeName>
        <fullName evidence="1">NADPH-dependent nitrile oxidoreductase</fullName>
    </alternativeName>
    <alternativeName>
        <fullName evidence="1">PreQ(0) reductase</fullName>
    </alternativeName>
</protein>
<name>QUEF_SHESM</name>
<gene>
    <name evidence="1" type="primary">queF</name>
    <name type="ordered locus">Shewmr4_2661</name>
</gene>
<dbReference type="EC" id="1.7.1.13" evidence="1"/>
<dbReference type="EMBL" id="CP000446">
    <property type="protein sequence ID" value="ABI39732.1"/>
    <property type="molecule type" value="Genomic_DNA"/>
</dbReference>
<dbReference type="RefSeq" id="WP_011623412.1">
    <property type="nucleotide sequence ID" value="NC_008321.1"/>
</dbReference>
<dbReference type="SMR" id="Q0HGT5"/>
<dbReference type="GeneID" id="94728773"/>
<dbReference type="KEGG" id="she:Shewmr4_2661"/>
<dbReference type="HOGENOM" id="CLU_054738_0_0_6"/>
<dbReference type="UniPathway" id="UPA00392"/>
<dbReference type="GO" id="GO:0005737">
    <property type="term" value="C:cytoplasm"/>
    <property type="evidence" value="ECO:0007669"/>
    <property type="project" value="UniProtKB-SubCell"/>
</dbReference>
<dbReference type="GO" id="GO:0033739">
    <property type="term" value="F:preQ1 synthase activity"/>
    <property type="evidence" value="ECO:0007669"/>
    <property type="project" value="UniProtKB-UniRule"/>
</dbReference>
<dbReference type="GO" id="GO:0008616">
    <property type="term" value="P:queuosine biosynthetic process"/>
    <property type="evidence" value="ECO:0007669"/>
    <property type="project" value="UniProtKB-UniRule"/>
</dbReference>
<dbReference type="GO" id="GO:0006400">
    <property type="term" value="P:tRNA modification"/>
    <property type="evidence" value="ECO:0007669"/>
    <property type="project" value="UniProtKB-UniRule"/>
</dbReference>
<dbReference type="Gene3D" id="3.30.1130.10">
    <property type="match status" value="2"/>
</dbReference>
<dbReference type="HAMAP" id="MF_00817">
    <property type="entry name" value="QueF_type2"/>
    <property type="match status" value="1"/>
</dbReference>
<dbReference type="InterPro" id="IPR043133">
    <property type="entry name" value="GTP-CH-I_C/QueF"/>
</dbReference>
<dbReference type="InterPro" id="IPR050084">
    <property type="entry name" value="NADPH_dep_7-cyano-7-deazaG_red"/>
</dbReference>
<dbReference type="InterPro" id="IPR029500">
    <property type="entry name" value="QueF"/>
</dbReference>
<dbReference type="InterPro" id="IPR029139">
    <property type="entry name" value="QueF_N"/>
</dbReference>
<dbReference type="InterPro" id="IPR016428">
    <property type="entry name" value="QueF_type2"/>
</dbReference>
<dbReference type="NCBIfam" id="TIGR03138">
    <property type="entry name" value="QueF"/>
    <property type="match status" value="1"/>
</dbReference>
<dbReference type="PANTHER" id="PTHR34354">
    <property type="entry name" value="NADPH-DEPENDENT 7-CYANO-7-DEAZAGUANINE REDUCTASE"/>
    <property type="match status" value="1"/>
</dbReference>
<dbReference type="PANTHER" id="PTHR34354:SF1">
    <property type="entry name" value="NADPH-DEPENDENT 7-CYANO-7-DEAZAGUANINE REDUCTASE"/>
    <property type="match status" value="1"/>
</dbReference>
<dbReference type="Pfam" id="PF14489">
    <property type="entry name" value="QueF"/>
    <property type="match status" value="1"/>
</dbReference>
<dbReference type="Pfam" id="PF14819">
    <property type="entry name" value="QueF_N"/>
    <property type="match status" value="1"/>
</dbReference>
<dbReference type="PIRSF" id="PIRSF004750">
    <property type="entry name" value="Nitrile_oxidored_YqcD_prd"/>
    <property type="match status" value="1"/>
</dbReference>
<dbReference type="SUPFAM" id="SSF55620">
    <property type="entry name" value="Tetrahydrobiopterin biosynthesis enzymes-like"/>
    <property type="match status" value="1"/>
</dbReference>